<reference key="1">
    <citation type="journal article" date="2007" name="Nat. Biotechnol.">
        <title>Genome sequencing and analysis of the versatile cell factory Aspergillus niger CBS 513.88.</title>
        <authorList>
            <person name="Pel H.J."/>
            <person name="de Winde J.H."/>
            <person name="Archer D.B."/>
            <person name="Dyer P.S."/>
            <person name="Hofmann G."/>
            <person name="Schaap P.J."/>
            <person name="Turner G."/>
            <person name="de Vries R.P."/>
            <person name="Albang R."/>
            <person name="Albermann K."/>
            <person name="Andersen M.R."/>
            <person name="Bendtsen J.D."/>
            <person name="Benen J.A.E."/>
            <person name="van den Berg M."/>
            <person name="Breestraat S."/>
            <person name="Caddick M.X."/>
            <person name="Contreras R."/>
            <person name="Cornell M."/>
            <person name="Coutinho P.M."/>
            <person name="Danchin E.G.J."/>
            <person name="Debets A.J.M."/>
            <person name="Dekker P."/>
            <person name="van Dijck P.W.M."/>
            <person name="van Dijk A."/>
            <person name="Dijkhuizen L."/>
            <person name="Driessen A.J.M."/>
            <person name="d'Enfert C."/>
            <person name="Geysens S."/>
            <person name="Goosen C."/>
            <person name="Groot G.S.P."/>
            <person name="de Groot P.W.J."/>
            <person name="Guillemette T."/>
            <person name="Henrissat B."/>
            <person name="Herweijer M."/>
            <person name="van den Hombergh J.P.T.W."/>
            <person name="van den Hondel C.A.M.J.J."/>
            <person name="van der Heijden R.T.J.M."/>
            <person name="van der Kaaij R.M."/>
            <person name="Klis F.M."/>
            <person name="Kools H.J."/>
            <person name="Kubicek C.P."/>
            <person name="van Kuyk P.A."/>
            <person name="Lauber J."/>
            <person name="Lu X."/>
            <person name="van der Maarel M.J.E.C."/>
            <person name="Meulenberg R."/>
            <person name="Menke H."/>
            <person name="Mortimer M.A."/>
            <person name="Nielsen J."/>
            <person name="Oliver S.G."/>
            <person name="Olsthoorn M."/>
            <person name="Pal K."/>
            <person name="van Peij N.N.M.E."/>
            <person name="Ram A.F.J."/>
            <person name="Rinas U."/>
            <person name="Roubos J.A."/>
            <person name="Sagt C.M.J."/>
            <person name="Schmoll M."/>
            <person name="Sun J."/>
            <person name="Ussery D."/>
            <person name="Varga J."/>
            <person name="Vervecken W."/>
            <person name="van de Vondervoort P.J.J."/>
            <person name="Wedler H."/>
            <person name="Woesten H.A.B."/>
            <person name="Zeng A.-P."/>
            <person name="van Ooyen A.J.J."/>
            <person name="Visser J."/>
            <person name="Stam H."/>
        </authorList>
    </citation>
    <scope>NUCLEOTIDE SEQUENCE [LARGE SCALE GENOMIC DNA]</scope>
    <source>
        <strain>ATCC MYA-4892 / CBS 513.88 / FGSC A1513</strain>
    </source>
</reference>
<reference key="2">
    <citation type="journal article" date="2013" name="Appl. Microbiol. Biotechnol.">
        <title>Autophagy promotes survival in aging submerged cultures of the filamentous fungus Aspergillus niger.</title>
        <authorList>
            <person name="Nitsche B.M."/>
            <person name="Burggraaf-van Welzen A.M."/>
            <person name="Lamers G."/>
            <person name="Meyer V."/>
            <person name="Ram A.F."/>
        </authorList>
    </citation>
    <scope>FUNCTION</scope>
</reference>
<accession>A2QPN1</accession>
<evidence type="ECO:0000250" key="1">
    <source>
        <dbReference type="UniProtKB" id="P38182"/>
    </source>
</evidence>
<evidence type="ECO:0000269" key="2">
    <source>
    </source>
</evidence>
<evidence type="ECO:0000305" key="3"/>
<organism>
    <name type="scientific">Aspergillus niger (strain ATCC MYA-4892 / CBS 513.88 / FGSC A1513)</name>
    <dbReference type="NCBI Taxonomy" id="425011"/>
    <lineage>
        <taxon>Eukaryota</taxon>
        <taxon>Fungi</taxon>
        <taxon>Dikarya</taxon>
        <taxon>Ascomycota</taxon>
        <taxon>Pezizomycotina</taxon>
        <taxon>Eurotiomycetes</taxon>
        <taxon>Eurotiomycetidae</taxon>
        <taxon>Eurotiales</taxon>
        <taxon>Aspergillaceae</taxon>
        <taxon>Aspergillus</taxon>
        <taxon>Aspergillus subgen. Circumdati</taxon>
    </lineage>
</organism>
<name>ATG8_ASPNC</name>
<sequence>MRSKFKDEHPFEKRKAEAERIRQKYADRIPVICEKVEKSDIATIDKKKYLVPADLTVGQFVYVIRKRIKLSPEKAIFIFVDEVLPPTAALMSSIYEEHKDEDGFLYITYSGENTFGDC</sequence>
<comment type="function">
    <text evidence="1 2">Ubiquitin-like modifier involved in autophagosome formation. With atg4, mediates the delivery of the autophagosomes to the vacuole via the microtubule cytoskeleton. Required for selective autophagic degradation of the nucleus (nucleophagy) as well as for mitophagy which contributes to regulate mitochondrial quantity and quality by eliminating the mitochondria to a basal level to fulfill cellular energy requirements and preventing excess ROS production. Participates also in membrane fusion events that take place in the early secretory pathway. Also involved in endoplasmic reticulum-specific autophagic process and is essential for the survival of cells subjected to severe ER stress. The atg8-PE conjugate mediates tethering between adjacent membranes and stimulates membrane hemifusion, leading to expansion of the autophagosomal membrane during autophagy (By similarity). Besides its function in nutrient recycling, autophagy plays important roles in physiological adaptation by organelle turnover (such as mitochondrial turnover) and protection against cell death upon carbon depletion in submerged cultures (PubMed:23700238).</text>
</comment>
<comment type="subcellular location">
    <subcellularLocation>
        <location evidence="1">Cytoplasmic vesicle</location>
        <location evidence="1">Autophagosome membrane</location>
        <topology evidence="1">Lipid-anchor</topology>
    </subcellularLocation>
    <subcellularLocation>
        <location evidence="1">Vacuole membrane</location>
        <topology evidence="1">Lipid-anchor</topology>
    </subcellularLocation>
</comment>
<comment type="PTM">
    <text evidence="1">The C-terminal 2 residues are removed by atg4 to expose Gly-116 at the C-terminus. The c-terminal Gly is then amidated with phosphatidylethanolamine by an activating system similar to that for ubiquitin.</text>
</comment>
<comment type="similarity">
    <text evidence="3">Belongs to the ATG8 family.</text>
</comment>
<gene>
    <name type="primary">atg8</name>
    <name type="ORF">An07g10020</name>
</gene>
<protein>
    <recommendedName>
        <fullName>Autophagy-related protein 8</fullName>
    </recommendedName>
    <alternativeName>
        <fullName>Autophagy-related ubiquitin-like modifier atg8</fullName>
    </alternativeName>
</protein>
<keyword id="KW-0072">Autophagy</keyword>
<keyword id="KW-0968">Cytoplasmic vesicle</keyword>
<keyword id="KW-0449">Lipoprotein</keyword>
<keyword id="KW-0472">Membrane</keyword>
<keyword id="KW-0653">Protein transport</keyword>
<keyword id="KW-1185">Reference proteome</keyword>
<keyword id="KW-0813">Transport</keyword>
<keyword id="KW-0833">Ubl conjugation pathway</keyword>
<keyword id="KW-0926">Vacuole</keyword>
<dbReference type="EMBL" id="AM270155">
    <property type="protein sequence ID" value="CAK45131.1"/>
    <property type="molecule type" value="Genomic_DNA"/>
</dbReference>
<dbReference type="RefSeq" id="XP_001392077.1">
    <property type="nucleotide sequence ID" value="XM_001392040.2"/>
</dbReference>
<dbReference type="SMR" id="A2QPN1"/>
<dbReference type="EnsemblFungi" id="CAK45131">
    <property type="protein sequence ID" value="CAK45131"/>
    <property type="gene ID" value="An07g10020"/>
</dbReference>
<dbReference type="GeneID" id="4982271"/>
<dbReference type="KEGG" id="ang:An07g10020"/>
<dbReference type="VEuPathDB" id="FungiDB:An07g10020"/>
<dbReference type="HOGENOM" id="CLU_119276_0_1_1"/>
<dbReference type="Proteomes" id="UP000006706">
    <property type="component" value="Chromosome 4L"/>
</dbReference>
<dbReference type="GO" id="GO:0000421">
    <property type="term" value="C:autophagosome membrane"/>
    <property type="evidence" value="ECO:0007669"/>
    <property type="project" value="UniProtKB-SubCell"/>
</dbReference>
<dbReference type="GO" id="GO:0031410">
    <property type="term" value="C:cytoplasmic vesicle"/>
    <property type="evidence" value="ECO:0007669"/>
    <property type="project" value="UniProtKB-KW"/>
</dbReference>
<dbReference type="GO" id="GO:0043936">
    <property type="term" value="P:asexual sporulation resulting in formation of a cellular spore"/>
    <property type="evidence" value="ECO:0000315"/>
    <property type="project" value="AspGD"/>
</dbReference>
<dbReference type="GO" id="GO:0006914">
    <property type="term" value="P:autophagy"/>
    <property type="evidence" value="ECO:0000315"/>
    <property type="project" value="AspGD"/>
</dbReference>
<dbReference type="GO" id="GO:0034599">
    <property type="term" value="P:cellular response to oxidative stress"/>
    <property type="evidence" value="ECO:0000315"/>
    <property type="project" value="AspGD"/>
</dbReference>
<dbReference type="GO" id="GO:0015031">
    <property type="term" value="P:protein transport"/>
    <property type="evidence" value="ECO:0007669"/>
    <property type="project" value="UniProtKB-KW"/>
</dbReference>
<dbReference type="CDD" id="cd16128">
    <property type="entry name" value="Ubl_ATG8"/>
    <property type="match status" value="1"/>
</dbReference>
<dbReference type="FunFam" id="3.10.20.90:FF:000010">
    <property type="entry name" value="Autophagy-related protein"/>
    <property type="match status" value="1"/>
</dbReference>
<dbReference type="Gene3D" id="3.10.20.90">
    <property type="entry name" value="Phosphatidylinositol 3-kinase Catalytic Subunit, Chain A, domain 1"/>
    <property type="match status" value="1"/>
</dbReference>
<dbReference type="InterPro" id="IPR004241">
    <property type="entry name" value="Atg8-like"/>
</dbReference>
<dbReference type="InterPro" id="IPR029071">
    <property type="entry name" value="Ubiquitin-like_domsf"/>
</dbReference>
<dbReference type="PANTHER" id="PTHR10969">
    <property type="entry name" value="MICROTUBULE-ASSOCIATED PROTEINS 1A/1B LIGHT CHAIN 3-RELATED"/>
    <property type="match status" value="1"/>
</dbReference>
<dbReference type="Pfam" id="PF02991">
    <property type="entry name" value="ATG8"/>
    <property type="match status" value="1"/>
</dbReference>
<dbReference type="SUPFAM" id="SSF54236">
    <property type="entry name" value="Ubiquitin-like"/>
    <property type="match status" value="1"/>
</dbReference>
<feature type="chain" id="PRO_0000317876" description="Autophagy-related protein 8">
    <location>
        <begin position="1"/>
        <end position="116"/>
    </location>
</feature>
<feature type="propeptide" id="PRO_0000317877" description="Removed in mature form" evidence="1">
    <location>
        <begin position="117"/>
        <end position="118"/>
    </location>
</feature>
<feature type="site" description="Cleavage; by atg4" evidence="1">
    <location>
        <begin position="116"/>
        <end position="117"/>
    </location>
</feature>
<feature type="lipid moiety-binding region" description="Phosphatidylethanolamine amidated glycine" evidence="1">
    <location>
        <position position="116"/>
    </location>
</feature>
<proteinExistence type="inferred from homology"/>